<proteinExistence type="evidence at transcript level"/>
<comment type="function">
    <text evidence="2 6">Component of the Mediator complex, a coactivator involved in regulated gene transcription of nearly all RNA polymerase II-dependent genes. Mediator functions as a bridge to convey information from gene-specific regulatory proteins to the basal RNA polymerase II transcription machinery. Mediator is recruited to promoters by direct interactions with regulatory proteins and serves as a scaffold for the assembly of a functional pre-initiation complex with RNA polymerase II and the general transcription factors. Phosphorylates the CTD (C-terminal domain) of the large subunit of RNA polymerase II (RNAp II), which may inhibit the formation of a transcription initiation complex (By similarity). Involved in cell aggregation, but not growth. Required for starvation-induced expression of genes essential for early development of acaA and/or other genes.</text>
</comment>
<comment type="catalytic activity">
    <reaction>
        <text>L-seryl-[protein] + ATP = O-phospho-L-seryl-[protein] + ADP + H(+)</text>
        <dbReference type="Rhea" id="RHEA:17989"/>
        <dbReference type="Rhea" id="RHEA-COMP:9863"/>
        <dbReference type="Rhea" id="RHEA-COMP:11604"/>
        <dbReference type="ChEBI" id="CHEBI:15378"/>
        <dbReference type="ChEBI" id="CHEBI:29999"/>
        <dbReference type="ChEBI" id="CHEBI:30616"/>
        <dbReference type="ChEBI" id="CHEBI:83421"/>
        <dbReference type="ChEBI" id="CHEBI:456216"/>
        <dbReference type="EC" id="2.7.11.22"/>
    </reaction>
</comment>
<comment type="catalytic activity">
    <reaction>
        <text>L-threonyl-[protein] + ATP = O-phospho-L-threonyl-[protein] + ADP + H(+)</text>
        <dbReference type="Rhea" id="RHEA:46608"/>
        <dbReference type="Rhea" id="RHEA-COMP:11060"/>
        <dbReference type="Rhea" id="RHEA-COMP:11605"/>
        <dbReference type="ChEBI" id="CHEBI:15378"/>
        <dbReference type="ChEBI" id="CHEBI:30013"/>
        <dbReference type="ChEBI" id="CHEBI:30616"/>
        <dbReference type="ChEBI" id="CHEBI:61977"/>
        <dbReference type="ChEBI" id="CHEBI:456216"/>
        <dbReference type="EC" id="2.7.11.22"/>
    </reaction>
</comment>
<comment type="catalytic activity">
    <reaction>
        <text>[DNA-directed RNA polymerase] + ATP = phospho-[DNA-directed RNA polymerase] + ADP + H(+)</text>
        <dbReference type="Rhea" id="RHEA:10216"/>
        <dbReference type="Rhea" id="RHEA-COMP:11321"/>
        <dbReference type="Rhea" id="RHEA-COMP:11322"/>
        <dbReference type="ChEBI" id="CHEBI:15378"/>
        <dbReference type="ChEBI" id="CHEBI:30616"/>
        <dbReference type="ChEBI" id="CHEBI:43176"/>
        <dbReference type="ChEBI" id="CHEBI:68546"/>
        <dbReference type="ChEBI" id="CHEBI:456216"/>
        <dbReference type="EC" id="2.7.11.23"/>
    </reaction>
</comment>
<comment type="cofactor">
    <cofactor evidence="1">
        <name>Mg(2+)</name>
        <dbReference type="ChEBI" id="CHEBI:18420"/>
    </cofactor>
</comment>
<comment type="subunit">
    <text evidence="1">Component of the Mediator complex.</text>
</comment>
<comment type="subcellular location">
    <subcellularLocation>
        <location evidence="7">Nucleus</location>
    </subcellularLocation>
</comment>
<comment type="developmental stage">
    <text evidence="6">Expressed at a relatively low level during growth, increased 80-fold during early development, with a maximum during the growth phase at 12 hours, and quickly declined fourfold during 12 and 15 hours.</text>
</comment>
<comment type="disruption phenotype">
    <text evidence="6">Cells exhibit slow growth, they do not aggregate upon starvation and form small plaques on bacterial lawns.</text>
</comment>
<comment type="similarity">
    <text evidence="7">Belongs to the protein kinase superfamily. CMGC Ser/Thr protein kinase family. CDC2/CDKX subfamily.</text>
</comment>
<evidence type="ECO:0000250" key="1"/>
<evidence type="ECO:0000250" key="2">
    <source>
        <dbReference type="UniProtKB" id="Q9VT57"/>
    </source>
</evidence>
<evidence type="ECO:0000255" key="3">
    <source>
        <dbReference type="PROSITE-ProRule" id="PRU00159"/>
    </source>
</evidence>
<evidence type="ECO:0000255" key="4">
    <source>
        <dbReference type="PROSITE-ProRule" id="PRU10027"/>
    </source>
</evidence>
<evidence type="ECO:0000256" key="5">
    <source>
        <dbReference type="SAM" id="MobiDB-lite"/>
    </source>
</evidence>
<evidence type="ECO:0000269" key="6">
    <source>
    </source>
</evidence>
<evidence type="ECO:0000305" key="7"/>
<gene>
    <name type="primary">cdk8</name>
    <name type="ORF">DDB_G0267442</name>
</gene>
<organism>
    <name type="scientific">Dictyostelium discoideum</name>
    <name type="common">Social amoeba</name>
    <dbReference type="NCBI Taxonomy" id="44689"/>
    <lineage>
        <taxon>Eukaryota</taxon>
        <taxon>Amoebozoa</taxon>
        <taxon>Evosea</taxon>
        <taxon>Eumycetozoa</taxon>
        <taxon>Dictyostelia</taxon>
        <taxon>Dictyosteliales</taxon>
        <taxon>Dictyosteliaceae</taxon>
        <taxon>Dictyostelium</taxon>
    </lineage>
</organism>
<reference key="1">
    <citation type="journal article" date="2002" name="Dev. Growth Differ.">
        <title>A novel Dictyostelium Cdk8 is required for aggregation, but is dispensable for growth.</title>
        <authorList>
            <person name="Takeda K."/>
            <person name="Saito T."/>
            <person name="Ochiai H."/>
        </authorList>
    </citation>
    <scope>NUCLEOTIDE SEQUENCE [MRNA]</scope>
    <scope>FUNCTION</scope>
    <scope>DEVELOPMENTAL STAGE</scope>
    <scope>DISRUPTION PHENOTYPE</scope>
    <source>
        <strain>AX2</strain>
    </source>
</reference>
<reference key="2">
    <citation type="journal article" date="2005" name="Nature">
        <title>The genome of the social amoeba Dictyostelium discoideum.</title>
        <authorList>
            <person name="Eichinger L."/>
            <person name="Pachebat J.A."/>
            <person name="Gloeckner G."/>
            <person name="Rajandream M.A."/>
            <person name="Sucgang R."/>
            <person name="Berriman M."/>
            <person name="Song J."/>
            <person name="Olsen R."/>
            <person name="Szafranski K."/>
            <person name="Xu Q."/>
            <person name="Tunggal B."/>
            <person name="Kummerfeld S."/>
            <person name="Madera M."/>
            <person name="Konfortov B.A."/>
            <person name="Rivero F."/>
            <person name="Bankier A.T."/>
            <person name="Lehmann R."/>
            <person name="Hamlin N."/>
            <person name="Davies R."/>
            <person name="Gaudet P."/>
            <person name="Fey P."/>
            <person name="Pilcher K."/>
            <person name="Chen G."/>
            <person name="Saunders D."/>
            <person name="Sodergren E.J."/>
            <person name="Davis P."/>
            <person name="Kerhornou A."/>
            <person name="Nie X."/>
            <person name="Hall N."/>
            <person name="Anjard C."/>
            <person name="Hemphill L."/>
            <person name="Bason N."/>
            <person name="Farbrother P."/>
            <person name="Desany B."/>
            <person name="Just E."/>
            <person name="Morio T."/>
            <person name="Rost R."/>
            <person name="Churcher C.M."/>
            <person name="Cooper J."/>
            <person name="Haydock S."/>
            <person name="van Driessche N."/>
            <person name="Cronin A."/>
            <person name="Goodhead I."/>
            <person name="Muzny D.M."/>
            <person name="Mourier T."/>
            <person name="Pain A."/>
            <person name="Lu M."/>
            <person name="Harper D."/>
            <person name="Lindsay R."/>
            <person name="Hauser H."/>
            <person name="James K.D."/>
            <person name="Quiles M."/>
            <person name="Madan Babu M."/>
            <person name="Saito T."/>
            <person name="Buchrieser C."/>
            <person name="Wardroper A."/>
            <person name="Felder M."/>
            <person name="Thangavelu M."/>
            <person name="Johnson D."/>
            <person name="Knights A."/>
            <person name="Loulseged H."/>
            <person name="Mungall K.L."/>
            <person name="Oliver K."/>
            <person name="Price C."/>
            <person name="Quail M.A."/>
            <person name="Urushihara H."/>
            <person name="Hernandez J."/>
            <person name="Rabbinowitsch E."/>
            <person name="Steffen D."/>
            <person name="Sanders M."/>
            <person name="Ma J."/>
            <person name="Kohara Y."/>
            <person name="Sharp S."/>
            <person name="Simmonds M.N."/>
            <person name="Spiegler S."/>
            <person name="Tivey A."/>
            <person name="Sugano S."/>
            <person name="White B."/>
            <person name="Walker D."/>
            <person name="Woodward J.R."/>
            <person name="Winckler T."/>
            <person name="Tanaka Y."/>
            <person name="Shaulsky G."/>
            <person name="Schleicher M."/>
            <person name="Weinstock G.M."/>
            <person name="Rosenthal A."/>
            <person name="Cox E.C."/>
            <person name="Chisholm R.L."/>
            <person name="Gibbs R.A."/>
            <person name="Loomis W.F."/>
            <person name="Platzer M."/>
            <person name="Kay R.R."/>
            <person name="Williams J.G."/>
            <person name="Dear P.H."/>
            <person name="Noegel A.A."/>
            <person name="Barrell B.G."/>
            <person name="Kuspa A."/>
        </authorList>
    </citation>
    <scope>NUCLEOTIDE SEQUENCE [LARGE SCALE GENOMIC DNA]</scope>
    <source>
        <strain>AX4</strain>
    </source>
</reference>
<keyword id="KW-0010">Activator</keyword>
<keyword id="KW-0067">ATP-binding</keyword>
<keyword id="KW-0418">Kinase</keyword>
<keyword id="KW-0547">Nucleotide-binding</keyword>
<keyword id="KW-0539">Nucleus</keyword>
<keyword id="KW-0597">Phosphoprotein</keyword>
<keyword id="KW-1185">Reference proteome</keyword>
<keyword id="KW-0678">Repressor</keyword>
<keyword id="KW-0723">Serine/threonine-protein kinase</keyword>
<keyword id="KW-0804">Transcription</keyword>
<keyword id="KW-0805">Transcription regulation</keyword>
<keyword id="KW-0808">Transferase</keyword>
<feature type="chain" id="PRO_0000328274" description="Probable cyclin-dependent kinase 8">
    <location>
        <begin position="1"/>
        <end position="380"/>
    </location>
</feature>
<feature type="domain" description="Protein kinase" evidence="3">
    <location>
        <begin position="44"/>
        <end position="348"/>
    </location>
</feature>
<feature type="region of interest" description="Disordered" evidence="5">
    <location>
        <begin position="1"/>
        <end position="22"/>
    </location>
</feature>
<feature type="compositionally biased region" description="Low complexity" evidence="5">
    <location>
        <begin position="1"/>
        <end position="10"/>
    </location>
</feature>
<feature type="compositionally biased region" description="Gly residues" evidence="5">
    <location>
        <begin position="11"/>
        <end position="22"/>
    </location>
</feature>
<feature type="active site" description="Proton acceptor" evidence="3 4">
    <location>
        <position position="172"/>
    </location>
</feature>
<feature type="binding site" evidence="3">
    <location>
        <begin position="50"/>
        <end position="58"/>
    </location>
    <ligand>
        <name>ATP</name>
        <dbReference type="ChEBI" id="CHEBI:30616"/>
    </ligand>
</feature>
<feature type="binding site" evidence="3">
    <location>
        <position position="74"/>
    </location>
    <ligand>
        <name>ATP</name>
        <dbReference type="ChEBI" id="CHEBI:30616"/>
    </ligand>
</feature>
<sequence length="380" mass="42771">MNTHNQSSNQNGGGSGGGGGGGGSSTFSPIVLTSTYRLDVQEKYTFSYEIGSGTYGMVYKADDKKRPNNKVAVKKFRSTKEGEGLSLTAYREIGLLKELSNENIVKLLDVCLNPKDKLLYLIFDYAEFDLFGIIKYHRENGSHFSDATIKSLIWQVLNGIHYLHSNWVIHRDLKPSNILVMGEGKECGTVKIGDFGLARIFQSPLKPLNENGVVVTIWYRSPELLLGSKHYTRAVDIWAIGCIFAELITTKPLFPGKEKDPKIPSLFQDDQVEKIIRVLGKPTLDMWPDIKHLPEWKRLSSMEAFPNSLAKCVGIDENSQAYDLLSKMILYDPSKRITASEALDHPYFKELPLPLPNAFSKPIPYPPRLPINKKKREFDD</sequence>
<accession>Q95YH0</accession>
<accession>Q55FD3</accession>
<dbReference type="EC" id="2.7.11.22"/>
<dbReference type="EC" id="2.7.11.23"/>
<dbReference type="EMBL" id="AB071894">
    <property type="protein sequence ID" value="BAB68407.1"/>
    <property type="molecule type" value="mRNA"/>
</dbReference>
<dbReference type="EMBL" id="AAFI02000003">
    <property type="protein sequence ID" value="EAL73173.1"/>
    <property type="molecule type" value="Genomic_DNA"/>
</dbReference>
<dbReference type="RefSeq" id="XP_647600.1">
    <property type="nucleotide sequence ID" value="XM_642508.1"/>
</dbReference>
<dbReference type="SMR" id="Q95YH0"/>
<dbReference type="FunCoup" id="Q95YH0">
    <property type="interactions" value="892"/>
</dbReference>
<dbReference type="STRING" id="44689.Q95YH0"/>
<dbReference type="PaxDb" id="44689-DDB0191261"/>
<dbReference type="EnsemblProtists" id="EAL73173">
    <property type="protein sequence ID" value="EAL73173"/>
    <property type="gene ID" value="DDB_G0267442"/>
</dbReference>
<dbReference type="GeneID" id="8616412"/>
<dbReference type="KEGG" id="ddi:DDB_G0267442"/>
<dbReference type="dictyBase" id="DDB_G0267442">
    <property type="gene designation" value="cdk8"/>
</dbReference>
<dbReference type="VEuPathDB" id="AmoebaDB:DDB_G0267442"/>
<dbReference type="eggNOG" id="KOG0666">
    <property type="taxonomic scope" value="Eukaryota"/>
</dbReference>
<dbReference type="HOGENOM" id="CLU_000288_181_6_1"/>
<dbReference type="InParanoid" id="Q95YH0"/>
<dbReference type="OMA" id="YFKNGGP"/>
<dbReference type="PhylomeDB" id="Q95YH0"/>
<dbReference type="PRO" id="PR:Q95YH0"/>
<dbReference type="Proteomes" id="UP000002195">
    <property type="component" value="Chromosome 1"/>
</dbReference>
<dbReference type="GO" id="GO:0005829">
    <property type="term" value="C:cytosol"/>
    <property type="evidence" value="ECO:0000314"/>
    <property type="project" value="dictyBase"/>
</dbReference>
<dbReference type="GO" id="GO:0016592">
    <property type="term" value="C:mediator complex"/>
    <property type="evidence" value="ECO:0000318"/>
    <property type="project" value="GO_Central"/>
</dbReference>
<dbReference type="GO" id="GO:0005634">
    <property type="term" value="C:nucleus"/>
    <property type="evidence" value="ECO:0000314"/>
    <property type="project" value="dictyBase"/>
</dbReference>
<dbReference type="GO" id="GO:0005524">
    <property type="term" value="F:ATP binding"/>
    <property type="evidence" value="ECO:0000305"/>
    <property type="project" value="dictyBase"/>
</dbReference>
<dbReference type="GO" id="GO:0004693">
    <property type="term" value="F:cyclin-dependent protein serine/threonine kinase activity"/>
    <property type="evidence" value="ECO:0007669"/>
    <property type="project" value="UniProtKB-EC"/>
</dbReference>
<dbReference type="GO" id="GO:0016538">
    <property type="term" value="F:cyclin-dependent protein serine/threonine kinase regulator activity"/>
    <property type="evidence" value="ECO:0000250"/>
    <property type="project" value="dictyBase"/>
</dbReference>
<dbReference type="GO" id="GO:0106310">
    <property type="term" value="F:protein serine kinase activity"/>
    <property type="evidence" value="ECO:0007669"/>
    <property type="project" value="RHEA"/>
</dbReference>
<dbReference type="GO" id="GO:0004674">
    <property type="term" value="F:protein serine/threonine kinase activity"/>
    <property type="evidence" value="ECO:0000318"/>
    <property type="project" value="GO_Central"/>
</dbReference>
<dbReference type="GO" id="GO:0008353">
    <property type="term" value="F:RNA polymerase II CTD heptapeptide repeat kinase activity"/>
    <property type="evidence" value="ECO:0000314"/>
    <property type="project" value="dictyBase"/>
</dbReference>
<dbReference type="GO" id="GO:0031152">
    <property type="term" value="P:aggregation involved in sorocarp development"/>
    <property type="evidence" value="ECO:0000315"/>
    <property type="project" value="dictyBase"/>
</dbReference>
<dbReference type="GO" id="GO:0000082">
    <property type="term" value="P:G1/S transition of mitotic cell cycle"/>
    <property type="evidence" value="ECO:0000250"/>
    <property type="project" value="UniProtKB"/>
</dbReference>
<dbReference type="GO" id="GO:0010628">
    <property type="term" value="P:positive regulation of gene expression"/>
    <property type="evidence" value="ECO:0000315"/>
    <property type="project" value="dictyBase"/>
</dbReference>
<dbReference type="GO" id="GO:0006468">
    <property type="term" value="P:protein phosphorylation"/>
    <property type="evidence" value="ECO:0000250"/>
    <property type="project" value="UniProtKB"/>
</dbReference>
<dbReference type="GO" id="GO:0050821">
    <property type="term" value="P:protein stabilization"/>
    <property type="evidence" value="ECO:0000315"/>
    <property type="project" value="dictyBase"/>
</dbReference>
<dbReference type="GO" id="GO:0060176">
    <property type="term" value="P:regulation of aggregation involved in sorocarp development"/>
    <property type="evidence" value="ECO:0000315"/>
    <property type="project" value="dictyBase"/>
</dbReference>
<dbReference type="GO" id="GO:0044671">
    <property type="term" value="P:sorocarp spore cell differentiation"/>
    <property type="evidence" value="ECO:0000315"/>
    <property type="project" value="dictyBase"/>
</dbReference>
<dbReference type="CDD" id="cd07842">
    <property type="entry name" value="STKc_CDK8_like"/>
    <property type="match status" value="1"/>
</dbReference>
<dbReference type="FunFam" id="3.30.200.20:FF:001590">
    <property type="match status" value="1"/>
</dbReference>
<dbReference type="FunFam" id="1.10.510.10:FF:000374">
    <property type="entry name" value="Putative cyclin-dependent kinase E-1"/>
    <property type="match status" value="1"/>
</dbReference>
<dbReference type="Gene3D" id="3.30.200.20">
    <property type="entry name" value="Phosphorylase Kinase, domain 1"/>
    <property type="match status" value="1"/>
</dbReference>
<dbReference type="Gene3D" id="1.10.510.10">
    <property type="entry name" value="Transferase(Phosphotransferase) domain 1"/>
    <property type="match status" value="1"/>
</dbReference>
<dbReference type="InterPro" id="IPR050108">
    <property type="entry name" value="CDK"/>
</dbReference>
<dbReference type="InterPro" id="IPR011009">
    <property type="entry name" value="Kinase-like_dom_sf"/>
</dbReference>
<dbReference type="InterPro" id="IPR000719">
    <property type="entry name" value="Prot_kinase_dom"/>
</dbReference>
<dbReference type="InterPro" id="IPR017441">
    <property type="entry name" value="Protein_kinase_ATP_BS"/>
</dbReference>
<dbReference type="InterPro" id="IPR008271">
    <property type="entry name" value="Ser/Thr_kinase_AS"/>
</dbReference>
<dbReference type="PANTHER" id="PTHR24056">
    <property type="entry name" value="CELL DIVISION PROTEIN KINASE"/>
    <property type="match status" value="1"/>
</dbReference>
<dbReference type="PANTHER" id="PTHR24056:SF495">
    <property type="entry name" value="CYCLIN-DEPENDENT KINASE 8-RELATED"/>
    <property type="match status" value="1"/>
</dbReference>
<dbReference type="Pfam" id="PF00069">
    <property type="entry name" value="Pkinase"/>
    <property type="match status" value="1"/>
</dbReference>
<dbReference type="SMART" id="SM00220">
    <property type="entry name" value="S_TKc"/>
    <property type="match status" value="1"/>
</dbReference>
<dbReference type="SUPFAM" id="SSF56112">
    <property type="entry name" value="Protein kinase-like (PK-like)"/>
    <property type="match status" value="1"/>
</dbReference>
<dbReference type="PROSITE" id="PS00107">
    <property type="entry name" value="PROTEIN_KINASE_ATP"/>
    <property type="match status" value="1"/>
</dbReference>
<dbReference type="PROSITE" id="PS50011">
    <property type="entry name" value="PROTEIN_KINASE_DOM"/>
    <property type="match status" value="1"/>
</dbReference>
<dbReference type="PROSITE" id="PS00108">
    <property type="entry name" value="PROTEIN_KINASE_ST"/>
    <property type="match status" value="1"/>
</dbReference>
<protein>
    <recommendedName>
        <fullName>Probable cyclin-dependent kinase 8</fullName>
        <ecNumber>2.7.11.22</ecNumber>
        <ecNumber>2.7.11.23</ecNumber>
    </recommendedName>
    <alternativeName>
        <fullName>Ddcdk8</fullName>
    </alternativeName>
</protein>
<name>CDK8_DICDI</name>